<feature type="chain" id="PRO_1000188649" description="tRNA-cytidine(32) 2-sulfurtransferase">
    <location>
        <begin position="1"/>
        <end position="274"/>
    </location>
</feature>
<feature type="short sequence motif" description="PP-loop motif" evidence="1">
    <location>
        <begin position="40"/>
        <end position="45"/>
    </location>
</feature>
<feature type="binding site" evidence="1">
    <location>
        <position position="115"/>
    </location>
    <ligand>
        <name>[4Fe-4S] cluster</name>
        <dbReference type="ChEBI" id="CHEBI:49883"/>
    </ligand>
</feature>
<feature type="binding site" evidence="1">
    <location>
        <position position="118"/>
    </location>
    <ligand>
        <name>[4Fe-4S] cluster</name>
        <dbReference type="ChEBI" id="CHEBI:49883"/>
    </ligand>
</feature>
<feature type="binding site" evidence="1">
    <location>
        <position position="206"/>
    </location>
    <ligand>
        <name>[4Fe-4S] cluster</name>
        <dbReference type="ChEBI" id="CHEBI:49883"/>
    </ligand>
</feature>
<name>TTCA_PSEA8</name>
<reference key="1">
    <citation type="journal article" date="2009" name="Genome Res.">
        <title>Newly introduced genomic prophage islands are critical determinants of in vivo competitiveness in the Liverpool epidemic strain of Pseudomonas aeruginosa.</title>
        <authorList>
            <person name="Winstanley C."/>
            <person name="Langille M.G.I."/>
            <person name="Fothergill J.L."/>
            <person name="Kukavica-Ibrulj I."/>
            <person name="Paradis-Bleau C."/>
            <person name="Sanschagrin F."/>
            <person name="Thomson N.R."/>
            <person name="Winsor G.L."/>
            <person name="Quail M.A."/>
            <person name="Lennard N."/>
            <person name="Bignell A."/>
            <person name="Clarke L."/>
            <person name="Seeger K."/>
            <person name="Saunders D."/>
            <person name="Harris D."/>
            <person name="Parkhill J."/>
            <person name="Hancock R.E.W."/>
            <person name="Brinkman F.S.L."/>
            <person name="Levesque R.C."/>
        </authorList>
    </citation>
    <scope>NUCLEOTIDE SEQUENCE [LARGE SCALE GENOMIC DNA]</scope>
    <source>
        <strain>LESB58</strain>
    </source>
</reference>
<protein>
    <recommendedName>
        <fullName evidence="1">tRNA-cytidine(32) 2-sulfurtransferase</fullName>
        <ecNumber evidence="1">2.8.1.-</ecNumber>
    </recommendedName>
    <alternativeName>
        <fullName evidence="1">Two-thiocytidine biosynthesis protein A</fullName>
    </alternativeName>
    <alternativeName>
        <fullName evidence="1">tRNA 2-thiocytidine biosynthesis protein TtcA</fullName>
    </alternativeName>
</protein>
<evidence type="ECO:0000255" key="1">
    <source>
        <dbReference type="HAMAP-Rule" id="MF_01850"/>
    </source>
</evidence>
<accession>B7UWY4</accession>
<organism>
    <name type="scientific">Pseudomonas aeruginosa (strain LESB58)</name>
    <dbReference type="NCBI Taxonomy" id="557722"/>
    <lineage>
        <taxon>Bacteria</taxon>
        <taxon>Pseudomonadati</taxon>
        <taxon>Pseudomonadota</taxon>
        <taxon>Gammaproteobacteria</taxon>
        <taxon>Pseudomonadales</taxon>
        <taxon>Pseudomonadaceae</taxon>
        <taxon>Pseudomonas</taxon>
    </lineage>
</organism>
<sequence>MGTLSVNQNKLQKRLRRLAGEAITDFNMIEDGDKVMVCLSGGKDSYTMLDILLYLQKVAPIRFEIVAVNMDQKQPGFPEHVLPEYLKSIGVEYHIVEKDTYSVVKEKIPEGKTTCSLCSRLRRGTLYTFADEIGATKMALGHHRDDILETFFLNMFYGGTLKAMPPKLLADDGRNVVIRPLAYCSEKDIEAYSQLKEFPIIPCNLCGSQENLQRQVVKEMLLEWERKSPGRTEIMFRALQNVVPSQLADRNLFDFANLRIDENATPRFLDVMNL</sequence>
<proteinExistence type="inferred from homology"/>
<dbReference type="EC" id="2.8.1.-" evidence="1"/>
<dbReference type="EMBL" id="FM209186">
    <property type="protein sequence ID" value="CAW28871.1"/>
    <property type="molecule type" value="Genomic_DNA"/>
</dbReference>
<dbReference type="RefSeq" id="WP_003082462.1">
    <property type="nucleotide sequence ID" value="NC_011770.1"/>
</dbReference>
<dbReference type="SMR" id="B7UWY4"/>
<dbReference type="GeneID" id="77222218"/>
<dbReference type="KEGG" id="pag:PLES_41171"/>
<dbReference type="HOGENOM" id="CLU_026481_0_0_6"/>
<dbReference type="GO" id="GO:0005737">
    <property type="term" value="C:cytoplasm"/>
    <property type="evidence" value="ECO:0007669"/>
    <property type="project" value="UniProtKB-SubCell"/>
</dbReference>
<dbReference type="GO" id="GO:0051539">
    <property type="term" value="F:4 iron, 4 sulfur cluster binding"/>
    <property type="evidence" value="ECO:0007669"/>
    <property type="project" value="UniProtKB-UniRule"/>
</dbReference>
<dbReference type="GO" id="GO:0005524">
    <property type="term" value="F:ATP binding"/>
    <property type="evidence" value="ECO:0007669"/>
    <property type="project" value="UniProtKB-UniRule"/>
</dbReference>
<dbReference type="GO" id="GO:0000287">
    <property type="term" value="F:magnesium ion binding"/>
    <property type="evidence" value="ECO:0007669"/>
    <property type="project" value="UniProtKB-UniRule"/>
</dbReference>
<dbReference type="GO" id="GO:0016783">
    <property type="term" value="F:sulfurtransferase activity"/>
    <property type="evidence" value="ECO:0007669"/>
    <property type="project" value="UniProtKB-UniRule"/>
</dbReference>
<dbReference type="GO" id="GO:0000049">
    <property type="term" value="F:tRNA binding"/>
    <property type="evidence" value="ECO:0007669"/>
    <property type="project" value="UniProtKB-KW"/>
</dbReference>
<dbReference type="GO" id="GO:0034227">
    <property type="term" value="P:tRNA thio-modification"/>
    <property type="evidence" value="ECO:0007669"/>
    <property type="project" value="UniProtKB-UniRule"/>
</dbReference>
<dbReference type="CDD" id="cd24138">
    <property type="entry name" value="TtcA-like"/>
    <property type="match status" value="1"/>
</dbReference>
<dbReference type="Gene3D" id="3.40.50.620">
    <property type="entry name" value="HUPs"/>
    <property type="match status" value="1"/>
</dbReference>
<dbReference type="HAMAP" id="MF_01850">
    <property type="entry name" value="TtcA"/>
    <property type="match status" value="1"/>
</dbReference>
<dbReference type="InterPro" id="IPR014729">
    <property type="entry name" value="Rossmann-like_a/b/a_fold"/>
</dbReference>
<dbReference type="InterPro" id="IPR011063">
    <property type="entry name" value="TilS/TtcA_N"/>
</dbReference>
<dbReference type="InterPro" id="IPR012089">
    <property type="entry name" value="tRNA_Cyd_32_2_STrfase"/>
</dbReference>
<dbReference type="InterPro" id="IPR035107">
    <property type="entry name" value="tRNA_thiolation_TtcA_Ctu1"/>
</dbReference>
<dbReference type="NCBIfam" id="NF007972">
    <property type="entry name" value="PRK10696.1"/>
    <property type="match status" value="1"/>
</dbReference>
<dbReference type="PANTHER" id="PTHR43686:SF1">
    <property type="entry name" value="AMINOTRAN_5 DOMAIN-CONTAINING PROTEIN"/>
    <property type="match status" value="1"/>
</dbReference>
<dbReference type="PANTHER" id="PTHR43686">
    <property type="entry name" value="SULFURTRANSFERASE-RELATED"/>
    <property type="match status" value="1"/>
</dbReference>
<dbReference type="Pfam" id="PF01171">
    <property type="entry name" value="ATP_bind_3"/>
    <property type="match status" value="1"/>
</dbReference>
<dbReference type="PIRSF" id="PIRSF004976">
    <property type="entry name" value="ATPase_YdaO"/>
    <property type="match status" value="1"/>
</dbReference>
<dbReference type="SUPFAM" id="SSF52402">
    <property type="entry name" value="Adenine nucleotide alpha hydrolases-like"/>
    <property type="match status" value="1"/>
</dbReference>
<gene>
    <name evidence="1" type="primary">ttcA</name>
    <name type="ordered locus">PLES_41171</name>
</gene>
<keyword id="KW-0004">4Fe-4S</keyword>
<keyword id="KW-0067">ATP-binding</keyword>
<keyword id="KW-0963">Cytoplasm</keyword>
<keyword id="KW-0408">Iron</keyword>
<keyword id="KW-0411">Iron-sulfur</keyword>
<keyword id="KW-0460">Magnesium</keyword>
<keyword id="KW-0479">Metal-binding</keyword>
<keyword id="KW-0547">Nucleotide-binding</keyword>
<keyword id="KW-0694">RNA-binding</keyword>
<keyword id="KW-0808">Transferase</keyword>
<keyword id="KW-0819">tRNA processing</keyword>
<keyword id="KW-0820">tRNA-binding</keyword>
<comment type="function">
    <text evidence="1">Catalyzes the ATP-dependent 2-thiolation of cytidine in position 32 of tRNA, to form 2-thiocytidine (s(2)C32). The sulfur atoms are provided by the cysteine/cysteine desulfurase (IscS) system.</text>
</comment>
<comment type="catalytic activity">
    <reaction evidence="1">
        <text>cytidine(32) in tRNA + S-sulfanyl-L-cysteinyl-[cysteine desulfurase] + AH2 + ATP = 2-thiocytidine(32) in tRNA + L-cysteinyl-[cysteine desulfurase] + A + AMP + diphosphate + H(+)</text>
        <dbReference type="Rhea" id="RHEA:57048"/>
        <dbReference type="Rhea" id="RHEA-COMP:10288"/>
        <dbReference type="Rhea" id="RHEA-COMP:12157"/>
        <dbReference type="Rhea" id="RHEA-COMP:12158"/>
        <dbReference type="Rhea" id="RHEA-COMP:14821"/>
        <dbReference type="ChEBI" id="CHEBI:13193"/>
        <dbReference type="ChEBI" id="CHEBI:15378"/>
        <dbReference type="ChEBI" id="CHEBI:17499"/>
        <dbReference type="ChEBI" id="CHEBI:29950"/>
        <dbReference type="ChEBI" id="CHEBI:30616"/>
        <dbReference type="ChEBI" id="CHEBI:33019"/>
        <dbReference type="ChEBI" id="CHEBI:61963"/>
        <dbReference type="ChEBI" id="CHEBI:82748"/>
        <dbReference type="ChEBI" id="CHEBI:141453"/>
        <dbReference type="ChEBI" id="CHEBI:456215"/>
    </reaction>
    <physiologicalReaction direction="left-to-right" evidence="1">
        <dbReference type="Rhea" id="RHEA:57049"/>
    </physiologicalReaction>
</comment>
<comment type="cofactor">
    <cofactor evidence="1">
        <name>Mg(2+)</name>
        <dbReference type="ChEBI" id="CHEBI:18420"/>
    </cofactor>
</comment>
<comment type="cofactor">
    <cofactor evidence="1">
        <name>[4Fe-4S] cluster</name>
        <dbReference type="ChEBI" id="CHEBI:49883"/>
    </cofactor>
    <text evidence="1">Binds 1 [4Fe-4S] cluster per subunit. The cluster is chelated by three Cys residues, the fourth Fe has a free coordination site that may bind a sulfur atom transferred from the persulfide of IscS.</text>
</comment>
<comment type="pathway">
    <text evidence="1">tRNA modification.</text>
</comment>
<comment type="subunit">
    <text evidence="1">Homodimer.</text>
</comment>
<comment type="subcellular location">
    <subcellularLocation>
        <location evidence="1">Cytoplasm</location>
    </subcellularLocation>
</comment>
<comment type="miscellaneous">
    <text evidence="1">The thiolation reaction likely consists of two steps: a first activation step by ATP to form an adenylated intermediate of the target base of tRNA, and a second nucleophilic substitution step of the sulfur (S) atom supplied by the hydrosulfide attached to the Fe-S cluster.</text>
</comment>
<comment type="similarity">
    <text evidence="1">Belongs to the TtcA family.</text>
</comment>